<name>GP64_HETPA</name>
<protein>
    <recommendedName>
        <fullName>Cell-cell adhesion glycoprotein 64</fullName>
        <shortName evidence="8 10 12">Gp64</shortName>
    </recommendedName>
    <alternativeName>
        <fullName evidence="9">Contact site 1</fullName>
    </alternativeName>
</protein>
<accession>Q52085</accession>
<accession>Q9U8R5</accession>
<reference evidence="11 12" key="1">
    <citation type="journal article" date="1994" name="J. Biol. Chem.">
        <title>Molecular cloning and the COOH-terminal processing of gp64, a putative cell-cell adhesion protein of the cellular slime mold Polysphondylium pallidum.</title>
        <authorList>
            <person name="Manabe R."/>
            <person name="Saito T."/>
            <person name="Kumazaki T."/>
            <person name="Sakaitani T."/>
            <person name="Nakata N."/>
            <person name="Ochiai H."/>
        </authorList>
    </citation>
    <scope>NUCLEOTIDE SEQUENCE [MRNA]</scope>
    <scope>PROTEIN SEQUENCE OF 20-39 AND 285-298</scope>
    <scope>SUBCELLULAR LOCATION</scope>
    <scope>DEVELOPMENTAL STAGE</scope>
    <source>
        <strain evidence="12">ATCC 44843 / DSM 1394 / WS320</strain>
    </source>
</reference>
<reference evidence="11 13" key="2">
    <citation type="journal article" date="1999" name="Biochim. Biophys. Acta">
        <title>Promoter analysis of the membrane protein gp64 gene of the cellular slime mold Polysphondylium pallidum.</title>
        <authorList>
            <person name="Takaoka N."/>
            <person name="Fukuzawa M."/>
            <person name="Saito T."/>
            <person name="Sakaitani T."/>
            <person name="Ochiai H."/>
        </authorList>
    </citation>
    <scope>NUCLEOTIDE SEQUENCE [GENOMIC DNA]</scope>
    <source>
        <strain evidence="13">ATCC 44843 / DSM 1394 / WS320</strain>
    </source>
</reference>
<reference evidence="11" key="3">
    <citation type="journal article" date="1993" name="Eur. J. Biochem.">
        <title>A purification method and N-glycosylation sites of a 36-cysteine-containing, putative cell/cell adhesion glycoprotein gp64 of the cellular slime mold, Polysphondylium pallidum.</title>
        <authorList>
            <person name="Saito T."/>
            <person name="Kumazaki T."/>
            <person name="Ochiai H."/>
        </authorList>
    </citation>
    <scope>PROTEIN SEQUENCE OF 28-41; 48-53; 78-107; 134-144; 151-162; 181-192; 207-219 AND 285-299</scope>
    <scope>DISULFIDE BONDS</scope>
    <scope>GLYCOSYLATION AT ASN-49; ASN-80; ASN-141; ASN-158; ASN-187 AND ASN-216</scope>
</reference>
<reference evidence="11" key="4">
    <citation type="journal article" date="1994" name="J. Biol. Chem.">
        <title>Assignment of disulfide bonds in gp64, a putative cell-cell adhesion protein of Polysphondylium pallidum. Presence of Sushi domains in the cellular slime mold protein.</title>
        <authorList>
            <person name="Saito T."/>
            <person name="Kumazaki T."/>
            <person name="Ochiai H."/>
        </authorList>
    </citation>
    <scope>PROTEIN SEQUENCE OF 38-43; 56-58; 63-91; 94-119; 122-124; 130-139; 146-150; 156-179; 184-213; 223-226; 230-249; 264-266; 268-272 AND 280-289</scope>
    <scope>DISULFIDE BONDS</scope>
</reference>
<reference evidence="11" key="5">
    <citation type="journal article" date="1981" name="Exp. Cell Res.">
        <title>Characterization of a purified cell surface glycoprotein as a contact site in Polysphondylium pallidum.</title>
        <authorList>
            <person name="Bozzaro S."/>
            <person name="Tsugita A."/>
            <person name="Janku M."/>
            <person name="Monok G."/>
            <person name="Opatz K."/>
            <person name="Gerisch G."/>
        </authorList>
    </citation>
    <scope>IDENTIFICATION</scope>
    <scope>FUNCTION</scope>
    <scope>SUBCELLULAR LOCATION</scope>
    <scope>DEVELOPMENTAL STAGE</scope>
    <scope>GLYCOSYLATION</scope>
</reference>
<reference evidence="11" key="6">
    <citation type="journal article" date="1984" name="Eur. J. Biochem.">
        <title>Monoclonal anti-glycoprotein antibody that blocks cell adhesion in Polysphondylium pallidum.</title>
        <authorList>
            <person name="Toda K."/>
            <person name="Bozzaro S."/>
            <person name="Lottspeich F."/>
            <person name="Merkl R."/>
            <person name="Gerisch G."/>
        </authorList>
    </citation>
    <scope>FUNCTION</scope>
    <scope>SUBCELLULAR LOCATION</scope>
    <scope>DEVELOPMENTAL STAGE</scope>
    <scope>GLYCOSYLATION</scope>
</reference>
<reference evidence="11" key="7">
    <citation type="journal article" date="1993" name="Eur. J. Biochem.">
        <title>Evidence for a glycolipid anchor of gp64, a putative cell-cell adhesion protein of Polysphondylium pallidum.</title>
        <authorList>
            <person name="Saito T."/>
            <person name="Ochiai H."/>
        </authorList>
    </citation>
    <scope>SUBCELLULAR LOCATION</scope>
    <scope>GPI-ANCHOR AT SER-298</scope>
</reference>
<reference evidence="11" key="8">
    <citation type="journal article" date="1996" name="J. Cell Sci.">
        <title>Antisense RNA inactivation of gene expression of a cell-cell adhesion protein (gp64) in the cellular slime mold Polysphondylium pallidum.</title>
        <authorList>
            <person name="Funamoto S."/>
            <person name="Ochiai H."/>
        </authorList>
    </citation>
    <scope>FUNCTION</scope>
</reference>
<organism>
    <name type="scientific">Heterostelium pallidum</name>
    <name type="common">Cellular slime mold</name>
    <name type="synonym">Polysphondylium pallidum</name>
    <dbReference type="NCBI Taxonomy" id="13642"/>
    <lineage>
        <taxon>Eukaryota</taxon>
        <taxon>Amoebozoa</taxon>
        <taxon>Evosea</taxon>
        <taxon>Eumycetozoa</taxon>
        <taxon>Dictyostelia</taxon>
        <taxon>Acytosteliales</taxon>
        <taxon>Acytosteliaceae</taxon>
        <taxon>Heterostelium</taxon>
    </lineage>
</organism>
<keyword id="KW-0130">Cell adhesion</keyword>
<keyword id="KW-1003">Cell membrane</keyword>
<keyword id="KW-0217">Developmental protein</keyword>
<keyword id="KW-0903">Direct protein sequencing</keyword>
<keyword id="KW-1015">Disulfide bond</keyword>
<keyword id="KW-0325">Glycoprotein</keyword>
<keyword id="KW-0336">GPI-anchor</keyword>
<keyword id="KW-0449">Lipoprotein</keyword>
<keyword id="KW-0472">Membrane</keyword>
<keyword id="KW-0732">Signal</keyword>
<gene>
    <name evidence="10" type="primary">gp64</name>
    <name evidence="12" type="synonym">c-p644</name>
</gene>
<evidence type="ECO:0000269" key="1">
    <source>
    </source>
</evidence>
<evidence type="ECO:0000269" key="2">
    <source>
    </source>
</evidence>
<evidence type="ECO:0000269" key="3">
    <source>
    </source>
</evidence>
<evidence type="ECO:0000269" key="4">
    <source>
    </source>
</evidence>
<evidence type="ECO:0000269" key="5">
    <source>
    </source>
</evidence>
<evidence type="ECO:0000269" key="6">
    <source>
    </source>
</evidence>
<evidence type="ECO:0000269" key="7">
    <source>
    </source>
</evidence>
<evidence type="ECO:0000303" key="8">
    <source>
    </source>
</evidence>
<evidence type="ECO:0000303" key="9">
    <source>
    </source>
</evidence>
<evidence type="ECO:0000303" key="10">
    <source>
    </source>
</evidence>
<evidence type="ECO:0000305" key="11"/>
<evidence type="ECO:0000312" key="12">
    <source>
        <dbReference type="EMBL" id="BAA03637.1"/>
    </source>
</evidence>
<evidence type="ECO:0000312" key="13">
    <source>
        <dbReference type="EMBL" id="BAA86631.1"/>
    </source>
</evidence>
<comment type="function">
    <text evidence="1 2 5 7">Cell-cell adhesion during development.</text>
</comment>
<comment type="subcellular location">
    <subcellularLocation>
        <location evidence="1 2 4 5">Cell membrane</location>
        <topology evidence="1 2 4 5">Lipid-anchor</topology>
        <topology evidence="1 2 4 5">GPI-anchor</topology>
    </subcellularLocation>
    <text evidence="1 2 4 5">Attached to the membrane by a GPI-like-anchor that contains a phosphoceramide group.</text>
</comment>
<comment type="developmental stage">
    <text evidence="1 2 5">Expressed in vegetative cells and throughout development. Levels peak during the aggregation stage before declining and then rising again during culmination (at protein level).</text>
</comment>
<comment type="PTM">
    <text evidence="3 6">Contains 18 disulfide bonds.</text>
</comment>
<comment type="PTM">
    <text evidence="4">The GPI-like-anchor contains a phosphoceramide group, rather than a phosphatidyl group.</text>
</comment>
<comment type="miscellaneous">
    <text evidence="7">Loss-of-function mutant (antisense inhibition) shows reduced cell adhesiveness and forms smaller aggregates than wild-type, though it does complete development and produce fruiting bodies.</text>
</comment>
<comment type="caution">
    <text evidence="11">The Dictyosteliida are known to produce a glycosylsphingolipidinositol anchor (GPI-like-anchor). It has not been established whether Dictyosteliida make a glycosylphosphatidylinositol anchor (GPI-anchor), and whether their GPI-like-anchor modifications can be interconverted with GPI-anchor modifications in a 'resculpting process'. It has not been established that the GPI-like-anchor modification in Dictyosteliida utilizes the same sequence motif as the GPI-anchor modification.</text>
</comment>
<proteinExistence type="evidence at protein level"/>
<dbReference type="EMBL" id="D14993">
    <property type="protein sequence ID" value="BAA03637.1"/>
    <property type="molecule type" value="mRNA"/>
</dbReference>
<dbReference type="EMBL" id="AB027502">
    <property type="protein sequence ID" value="BAA86631.1"/>
    <property type="molecule type" value="Genomic_DNA"/>
</dbReference>
<dbReference type="PIR" id="A53119">
    <property type="entry name" value="A53119"/>
</dbReference>
<dbReference type="GlyCosmos" id="Q52085">
    <property type="glycosylation" value="6 sites, No reported glycans"/>
</dbReference>
<dbReference type="iPTMnet" id="Q52085"/>
<dbReference type="GO" id="GO:0005886">
    <property type="term" value="C:plasma membrane"/>
    <property type="evidence" value="ECO:0007669"/>
    <property type="project" value="UniProtKB-SubCell"/>
</dbReference>
<dbReference type="GO" id="GO:0098552">
    <property type="term" value="C:side of membrane"/>
    <property type="evidence" value="ECO:0007669"/>
    <property type="project" value="UniProtKB-KW"/>
</dbReference>
<dbReference type="GO" id="GO:0007155">
    <property type="term" value="P:cell adhesion"/>
    <property type="evidence" value="ECO:0007669"/>
    <property type="project" value="UniProtKB-KW"/>
</dbReference>
<dbReference type="InterPro" id="IPR052326">
    <property type="entry name" value="Diff-Dev_Assoc_Protein"/>
</dbReference>
<dbReference type="PANTHER" id="PTHR33459">
    <property type="entry name" value="DD-GDCA PROTEIN"/>
    <property type="match status" value="1"/>
</dbReference>
<dbReference type="PANTHER" id="PTHR33459:SF7">
    <property type="entry name" value="DD-GDCA PROTEIN"/>
    <property type="match status" value="1"/>
</dbReference>
<feature type="signal peptide" evidence="5">
    <location>
        <begin position="1"/>
        <end position="19"/>
    </location>
</feature>
<feature type="chain" id="PRO_0000371261" description="Cell-cell adhesion glycoprotein 64">
    <location>
        <begin position="20"/>
        <end position="298"/>
    </location>
</feature>
<feature type="propeptide" id="PRO_0000371262" description="Removed in mature form" evidence="5">
    <location>
        <begin position="299"/>
        <end position="320"/>
    </location>
</feature>
<feature type="lipid moiety-binding region" description="GPI-like-anchor amidated serine" evidence="4">
    <location>
        <position position="298"/>
    </location>
</feature>
<feature type="glycosylation site" description="N-linked (GlcNAc...) asparagine" evidence="6">
    <location>
        <position position="49"/>
    </location>
</feature>
<feature type="glycosylation site" description="N-linked (GlcNAc...) asparagine" evidence="6">
    <location>
        <position position="80"/>
    </location>
</feature>
<feature type="glycosylation site" description="N-linked (GlcNAc...) asparagine" evidence="6">
    <location>
        <position position="141"/>
    </location>
</feature>
<feature type="glycosylation site" description="N-linked (GlcNAc...) asparagine" evidence="6">
    <location>
        <position position="158"/>
    </location>
</feature>
<feature type="glycosylation site" description="N-linked (GlcNAc...) asparagine" evidence="6">
    <location>
        <position position="187"/>
    </location>
</feature>
<feature type="glycosylation site" description="N-linked (GlcNAc...) asparagine" evidence="6">
    <location>
        <position position="216"/>
    </location>
</feature>
<feature type="disulfide bond" evidence="3">
    <location>
        <begin position="39"/>
        <end position="57"/>
    </location>
</feature>
<feature type="disulfide bond" evidence="3">
    <location>
        <begin position="67"/>
        <end position="79"/>
    </location>
</feature>
<feature type="disulfide bond" evidence="3">
    <location>
        <begin position="73"/>
        <end position="86"/>
    </location>
</feature>
<feature type="disulfide bond" evidence="3">
    <location>
        <begin position="98"/>
        <end position="110"/>
    </location>
</feature>
<feature type="disulfide bond" evidence="3">
    <location>
        <begin position="104"/>
        <end position="115"/>
    </location>
</feature>
<feature type="disulfide bond" evidence="3">
    <location>
        <begin position="123"/>
        <end position="138"/>
    </location>
</feature>
<feature type="disulfide bond" evidence="3">
    <location>
        <begin position="132"/>
        <end position="147"/>
    </location>
</feature>
<feature type="disulfide bond" evidence="3">
    <location>
        <begin position="157"/>
        <end position="171"/>
    </location>
</feature>
<feature type="disulfide bond" evidence="3">
    <location>
        <begin position="165"/>
        <end position="176"/>
    </location>
</feature>
<feature type="disulfide bond" evidence="3">
    <location>
        <begin position="188"/>
        <end position="202"/>
    </location>
</feature>
<feature type="disulfide bond" evidence="3">
    <location>
        <begin position="194"/>
        <end position="207"/>
    </location>
</feature>
<feature type="disulfide bond" evidence="3">
    <location>
        <begin position="226"/>
        <end position="246"/>
    </location>
</feature>
<feature type="disulfide bond" evidence="3">
    <location>
        <begin position="232"/>
        <end position="234"/>
    </location>
</feature>
<feature type="disulfide bond" evidence="3">
    <location>
        <begin position="266"/>
        <end position="285"/>
    </location>
</feature>
<feature type="disulfide bond" evidence="3">
    <location>
        <begin position="270"/>
        <end position="281"/>
    </location>
</feature>
<sequence>MNKFITLFVLLASVSVAMSATCLTCVKEGAVCDATANICEEGTVCIKPNSTAANTICFVLPTLNEDCSGPLACADSYYCNTTSKICVEAYYLGVGESCSSENQCSTSLVCTGGKCVNEVYPLCGASNSRVGCKAGEGCAFNGTALVCSPFIANGAACNTSTSGLCHPVSSCSNGVCTAPLTGALNSNCTSNTDCNIANGLYCSSGKCTAVPEALNNCTTTPTVDNCLGYSACMCPSNDDTAKTGSCKDTIEYSDVTSDAYNKYDSCVVSCPAVTIVQKQSCLSKCTNPLAGAANNVCSSATTIAFNAFVVFAIVLSVLLF</sequence>